<sequence length="380" mass="42520">MRKNLWTFQFGGEASGLVGSAMVSQHFVVLLMSLYCLTQSVVESSSWWSLGMNPVQMPEVYIIGAQPLCSQLSGLSQGQKKLCQLYQDHMQFIGDGAKTGIKECQYQFRHRRWNCSTVDNTSVFGRVMQIGSRETAFTYAISAAGVVNAVSRACREGELSTCGCSRAARPKDLPRDWLWGGCGDNLDYGYRFAKEFVDAREREKIHQKGSYESSRIMMNLHNNEAGRRAVSTLADVACKCHGVSGSCSLKTCWLQLADFRKVGDHLKEKYDSAGAMKLNTRGKLVQVNNKFNSPTMNDLVYIDPSPDYCVHNESTGSLGTQGRLCNKTSEGMDGCELMCCGRGYDQFKTVQTERCHCKFHWCCYVKCKKCTEVVDQFACK</sequence>
<gene>
    <name type="primary">wnt5a</name>
</gene>
<evidence type="ECO:0000250" key="1">
    <source>
        <dbReference type="UniProtKB" id="P22725"/>
    </source>
</evidence>
<evidence type="ECO:0000250" key="2">
    <source>
        <dbReference type="UniProtKB" id="P27467"/>
    </source>
</evidence>
<evidence type="ECO:0000250" key="3">
    <source>
        <dbReference type="UniProtKB" id="P28026"/>
    </source>
</evidence>
<evidence type="ECO:0000250" key="4">
    <source>
        <dbReference type="UniProtKB" id="P41221"/>
    </source>
</evidence>
<evidence type="ECO:0000250" key="5">
    <source>
        <dbReference type="UniProtKB" id="P56704"/>
    </source>
</evidence>
<evidence type="ECO:0000255" key="6"/>
<evidence type="ECO:0000269" key="7">
    <source>
    </source>
</evidence>
<evidence type="ECO:0000269" key="8">
    <source>
    </source>
</evidence>
<evidence type="ECO:0000305" key="9"/>
<keyword id="KW-0217">Developmental protein</keyword>
<keyword id="KW-1015">Disulfide bond</keyword>
<keyword id="KW-0272">Extracellular matrix</keyword>
<keyword id="KW-0325">Glycoprotein</keyword>
<keyword id="KW-0449">Lipoprotein</keyword>
<keyword id="KW-1185">Reference proteome</keyword>
<keyword id="KW-0964">Secreted</keyword>
<keyword id="KW-0732">Signal</keyword>
<keyword id="KW-0879">Wnt signaling pathway</keyword>
<name>WNT5A_XENLA</name>
<proteinExistence type="evidence at transcript level"/>
<accession>P31286</accession>
<organism>
    <name type="scientific">Xenopus laevis</name>
    <name type="common">African clawed frog</name>
    <dbReference type="NCBI Taxonomy" id="8355"/>
    <lineage>
        <taxon>Eukaryota</taxon>
        <taxon>Metazoa</taxon>
        <taxon>Chordata</taxon>
        <taxon>Craniata</taxon>
        <taxon>Vertebrata</taxon>
        <taxon>Euteleostomi</taxon>
        <taxon>Amphibia</taxon>
        <taxon>Batrachia</taxon>
        <taxon>Anura</taxon>
        <taxon>Pipoidea</taxon>
        <taxon>Pipidae</taxon>
        <taxon>Xenopodinae</taxon>
        <taxon>Xenopus</taxon>
        <taxon>Xenopus</taxon>
    </lineage>
</organism>
<comment type="function">
    <text evidence="1 8">Ligand for members of the frizzled family of seven transmembrane receptors. Can activate or inhibit canonical Wnt signaling, depending on receptor context (By similarity). Plays a role in normal embryonic development (PubMed:8275867).</text>
</comment>
<comment type="subcellular location">
    <subcellularLocation>
        <location evidence="4">Secreted</location>
        <location evidence="4">Extracellular space</location>
        <location evidence="4">Extracellular matrix</location>
    </subcellularLocation>
    <subcellularLocation>
        <location evidence="4">Secreted</location>
    </subcellularLocation>
</comment>
<comment type="tissue specificity">
    <text evidence="8">Found primarily in ectoderm with lower levels of expression in mesoderm. Detected in the head and tail with lower expression in the middle of the embryo. No expression was found in the notochord.</text>
</comment>
<comment type="developmental stage">
    <text evidence="7">Present in oocytes. Levels decrease during early embryo development and then increase considerably in neurula and tadpole stages.</text>
</comment>
<comment type="PTM">
    <text evidence="2 5">Palmitoleoylation is required for efficient binding to frizzled receptors. Depalmitoleoylation leads to Wnt signaling pathway inhibition.</text>
</comment>
<comment type="similarity">
    <text evidence="9">Belongs to the Wnt family.</text>
</comment>
<feature type="signal peptide" evidence="6">
    <location>
        <begin position="1"/>
        <end position="40"/>
    </location>
</feature>
<feature type="chain" id="PRO_0000041431" description="Protein Wnt-5a">
    <location>
        <begin position="41"/>
        <end position="380"/>
    </location>
</feature>
<feature type="lipid moiety-binding region" description="O-palmitoleoyl serine; by PORCN" evidence="5">
    <location>
        <position position="244"/>
    </location>
</feature>
<feature type="glycosylation site" description="N-linked (GlcNAc...) asparagine" evidence="6">
    <location>
        <position position="114"/>
    </location>
</feature>
<feature type="glycosylation site" description="N-linked (GlcNAc...) asparagine" evidence="6">
    <location>
        <position position="120"/>
    </location>
</feature>
<feature type="glycosylation site" description="N-linked (GlcNAc...) asparagine" evidence="6">
    <location>
        <position position="312"/>
    </location>
</feature>
<feature type="glycosylation site" description="N-linked (GlcNAc...) asparagine" evidence="6">
    <location>
        <position position="326"/>
    </location>
</feature>
<feature type="disulfide bond" evidence="3">
    <location>
        <begin position="104"/>
        <end position="115"/>
    </location>
</feature>
<feature type="disulfide bond" evidence="3">
    <location>
        <begin position="154"/>
        <end position="162"/>
    </location>
</feature>
<feature type="disulfide bond" evidence="3">
    <location>
        <begin position="164"/>
        <end position="182"/>
    </location>
</feature>
<feature type="disulfide bond" evidence="3">
    <location>
        <begin position="238"/>
        <end position="252"/>
    </location>
</feature>
<feature type="disulfide bond" evidence="3">
    <location>
        <begin position="240"/>
        <end position="247"/>
    </location>
</feature>
<feature type="disulfide bond" evidence="3">
    <location>
        <begin position="309"/>
        <end position="340"/>
    </location>
</feature>
<feature type="disulfide bond" evidence="3">
    <location>
        <begin position="325"/>
        <end position="335"/>
    </location>
</feature>
<feature type="disulfide bond" evidence="3">
    <location>
        <begin position="339"/>
        <end position="379"/>
    </location>
</feature>
<feature type="disulfide bond" evidence="3">
    <location>
        <begin position="355"/>
        <end position="370"/>
    </location>
</feature>
<feature type="disulfide bond" evidence="3">
    <location>
        <begin position="357"/>
        <end position="367"/>
    </location>
</feature>
<feature type="disulfide bond" evidence="3">
    <location>
        <begin position="362"/>
        <end position="363"/>
    </location>
</feature>
<feature type="sequence conflict" description="In Ref. 2; AAA50011." evidence="9" ref="2">
    <location>
        <position position="261"/>
    </location>
</feature>
<feature type="sequence conflict" description="In Ref. 2; AAA50011." evidence="9" ref="2">
    <original>H</original>
    <variation>L</variation>
    <location>
        <position position="265"/>
    </location>
</feature>
<feature type="sequence conflict" description="In Ref. 2; AAA50011." evidence="9" ref="2">
    <original>G</original>
    <variation>A</variation>
    <location>
        <position position="274"/>
    </location>
</feature>
<reference key="1">
    <citation type="journal article" date="1993" name="Development">
        <title>Xwnt-5A: a maternal Wnt that affects morphogenetic movements after overexpression in embryos of Xenopus laevis.</title>
        <authorList>
            <person name="Moon R.T."/>
            <person name="Campbell R.M."/>
            <person name="Christian J.L."/>
            <person name="McGrew L.L."/>
            <person name="Shih J."/>
            <person name="Fraser S."/>
        </authorList>
    </citation>
    <scope>NUCLEOTIDE SEQUENCE [MRNA]</scope>
    <scope>TISSUE SPECIFICITY</scope>
    <scope>FUNCTION</scope>
    <source>
        <tissue>Oocyte</tissue>
    </source>
</reference>
<reference key="2">
    <citation type="journal article" date="1991" name="Dev. Biol.">
        <title>Isolation of cDNAs partially encoding four Xenopus Wnt-1/int-1-related proteins and characterization of their transient expression during embryonic development.</title>
        <authorList>
            <person name="Christian J.L."/>
            <person name="Gavin B.J."/>
            <person name="McMahon A.P."/>
            <person name="Moon R.T."/>
        </authorList>
    </citation>
    <scope>NUCLEOTIDE SEQUENCE [MRNA] OF 238-363</scope>
    <scope>DEVELOPMENTAL STAGE</scope>
    <source>
        <tissue>Embryo</tissue>
    </source>
</reference>
<dbReference type="EMBL" id="L19716">
    <property type="protein sequence ID" value="AAA16628.1"/>
    <property type="molecule type" value="mRNA"/>
</dbReference>
<dbReference type="EMBL" id="M55056">
    <property type="protein sequence ID" value="AAA50011.1"/>
    <property type="molecule type" value="mRNA"/>
</dbReference>
<dbReference type="PIR" id="B49764">
    <property type="entry name" value="B49764"/>
</dbReference>
<dbReference type="RefSeq" id="NP_001079345.1">
    <property type="nucleotide sequence ID" value="NM_001085876.1"/>
</dbReference>
<dbReference type="SMR" id="P31286"/>
<dbReference type="BioGRID" id="97270">
    <property type="interactions" value="1"/>
</dbReference>
<dbReference type="GlyCosmos" id="P31286">
    <property type="glycosylation" value="4 sites, No reported glycans"/>
</dbReference>
<dbReference type="GeneID" id="378689"/>
<dbReference type="KEGG" id="xla:378689"/>
<dbReference type="CTD" id="378689"/>
<dbReference type="OrthoDB" id="5945655at2759"/>
<dbReference type="Proteomes" id="UP000186698">
    <property type="component" value="Chromosome 4S"/>
</dbReference>
<dbReference type="Bgee" id="378689">
    <property type="expression patterns" value="Expressed in internal ear and 15 other cell types or tissues"/>
</dbReference>
<dbReference type="GO" id="GO:0005576">
    <property type="term" value="C:extracellular region"/>
    <property type="evidence" value="ECO:0000304"/>
    <property type="project" value="Reactome"/>
</dbReference>
<dbReference type="GO" id="GO:0005615">
    <property type="term" value="C:extracellular space"/>
    <property type="evidence" value="ECO:0000318"/>
    <property type="project" value="GO_Central"/>
</dbReference>
<dbReference type="GO" id="GO:0032991">
    <property type="term" value="C:protein-containing complex"/>
    <property type="evidence" value="ECO:0000353"/>
    <property type="project" value="UniProtKB"/>
</dbReference>
<dbReference type="GO" id="GO:0005125">
    <property type="term" value="F:cytokine activity"/>
    <property type="evidence" value="ECO:0000318"/>
    <property type="project" value="GO_Central"/>
</dbReference>
<dbReference type="GO" id="GO:0005109">
    <property type="term" value="F:frizzled binding"/>
    <property type="evidence" value="ECO:0000318"/>
    <property type="project" value="GO_Central"/>
</dbReference>
<dbReference type="GO" id="GO:0017147">
    <property type="term" value="F:Wnt-protein binding"/>
    <property type="evidence" value="ECO:0000353"/>
    <property type="project" value="UniProtKB"/>
</dbReference>
<dbReference type="GO" id="GO:0008595">
    <property type="term" value="P:anterior/posterior axis specification, embryo"/>
    <property type="evidence" value="ECO:0000314"/>
    <property type="project" value="BHF-UCL"/>
</dbReference>
<dbReference type="GO" id="GO:0060070">
    <property type="term" value="P:canonical Wnt signaling pathway"/>
    <property type="evidence" value="ECO:0000314"/>
    <property type="project" value="BHF-UCL"/>
</dbReference>
<dbReference type="GO" id="GO:0045165">
    <property type="term" value="P:cell fate commitment"/>
    <property type="evidence" value="ECO:0000318"/>
    <property type="project" value="GO_Central"/>
</dbReference>
<dbReference type="GO" id="GO:0042074">
    <property type="term" value="P:cell migration involved in gastrulation"/>
    <property type="evidence" value="ECO:0000304"/>
    <property type="project" value="BHF-UCL"/>
</dbReference>
<dbReference type="GO" id="GO:0009950">
    <property type="term" value="P:dorsal/ventral axis specification"/>
    <property type="evidence" value="ECO:0000316"/>
    <property type="project" value="UniProtKB"/>
</dbReference>
<dbReference type="GO" id="GO:0090090">
    <property type="term" value="P:negative regulation of canonical Wnt signaling pathway"/>
    <property type="evidence" value="ECO:0000314"/>
    <property type="project" value="DFLAT"/>
</dbReference>
<dbReference type="GO" id="GO:0030182">
    <property type="term" value="P:neuron differentiation"/>
    <property type="evidence" value="ECO:0000318"/>
    <property type="project" value="GO_Central"/>
</dbReference>
<dbReference type="GO" id="GO:0045944">
    <property type="term" value="P:positive regulation of transcription by RNA polymerase II"/>
    <property type="evidence" value="ECO:0000316"/>
    <property type="project" value="BHF-UCL"/>
</dbReference>
<dbReference type="GO" id="GO:0060061">
    <property type="term" value="P:Spemann organizer formation"/>
    <property type="evidence" value="ECO:0000314"/>
    <property type="project" value="BHF-UCL"/>
</dbReference>
<dbReference type="FunFam" id="3.30.2460.20:FF:000001">
    <property type="entry name" value="Wnt homolog"/>
    <property type="match status" value="1"/>
</dbReference>
<dbReference type="Gene3D" id="3.30.2460.20">
    <property type="match status" value="1"/>
</dbReference>
<dbReference type="InterPro" id="IPR005817">
    <property type="entry name" value="Wnt"/>
</dbReference>
<dbReference type="InterPro" id="IPR043158">
    <property type="entry name" value="Wnt_C"/>
</dbReference>
<dbReference type="InterPro" id="IPR018161">
    <property type="entry name" value="Wnt_CS"/>
</dbReference>
<dbReference type="PANTHER" id="PTHR12027:SF33">
    <property type="entry name" value="PROTEIN WNT-5A"/>
    <property type="match status" value="1"/>
</dbReference>
<dbReference type="PANTHER" id="PTHR12027">
    <property type="entry name" value="WNT RELATED"/>
    <property type="match status" value="1"/>
</dbReference>
<dbReference type="Pfam" id="PF00110">
    <property type="entry name" value="wnt"/>
    <property type="match status" value="1"/>
</dbReference>
<dbReference type="PRINTS" id="PR01349">
    <property type="entry name" value="WNTPROTEIN"/>
</dbReference>
<dbReference type="SMART" id="SM00097">
    <property type="entry name" value="WNT1"/>
    <property type="match status" value="1"/>
</dbReference>
<dbReference type="PROSITE" id="PS00246">
    <property type="entry name" value="WNT1"/>
    <property type="match status" value="1"/>
</dbReference>
<protein>
    <recommendedName>
        <fullName>Protein Wnt-5a</fullName>
        <shortName>XWnt-5a</shortName>
    </recommendedName>
</protein>